<evidence type="ECO:0000255" key="1">
    <source>
        <dbReference type="HAMAP-Rule" id="MF_01693"/>
    </source>
</evidence>
<gene>
    <name evidence="1" type="primary">bioF</name>
    <name type="ordered locus">YPTB1183</name>
</gene>
<proteinExistence type="inferred from homology"/>
<reference key="1">
    <citation type="journal article" date="2004" name="Proc. Natl. Acad. Sci. U.S.A.">
        <title>Insights into the evolution of Yersinia pestis through whole-genome comparison with Yersinia pseudotuberculosis.</title>
        <authorList>
            <person name="Chain P.S.G."/>
            <person name="Carniel E."/>
            <person name="Larimer F.W."/>
            <person name="Lamerdin J."/>
            <person name="Stoutland P.O."/>
            <person name="Regala W.M."/>
            <person name="Georgescu A.M."/>
            <person name="Vergez L.M."/>
            <person name="Land M.L."/>
            <person name="Motin V.L."/>
            <person name="Brubaker R.R."/>
            <person name="Fowler J."/>
            <person name="Hinnebusch J."/>
            <person name="Marceau M."/>
            <person name="Medigue C."/>
            <person name="Simonet M."/>
            <person name="Chenal-Francisque V."/>
            <person name="Souza B."/>
            <person name="Dacheux D."/>
            <person name="Elliott J.M."/>
            <person name="Derbise A."/>
            <person name="Hauser L.J."/>
            <person name="Garcia E."/>
        </authorList>
    </citation>
    <scope>NUCLEOTIDE SEQUENCE [LARGE SCALE GENOMIC DNA]</scope>
    <source>
        <strain>IP32953</strain>
    </source>
</reference>
<feature type="chain" id="PRO_0000381160" description="8-amino-7-oxononanoate synthase">
    <location>
        <begin position="1"/>
        <end position="383"/>
    </location>
</feature>
<feature type="binding site" evidence="1">
    <location>
        <position position="21"/>
    </location>
    <ligand>
        <name>substrate</name>
    </ligand>
</feature>
<feature type="binding site" evidence="1">
    <location>
        <begin position="108"/>
        <end position="109"/>
    </location>
    <ligand>
        <name>pyridoxal 5'-phosphate</name>
        <dbReference type="ChEBI" id="CHEBI:597326"/>
    </ligand>
</feature>
<feature type="binding site" evidence="1">
    <location>
        <position position="133"/>
    </location>
    <ligand>
        <name>substrate</name>
    </ligand>
</feature>
<feature type="binding site" evidence="1">
    <location>
        <position position="179"/>
    </location>
    <ligand>
        <name>pyridoxal 5'-phosphate</name>
        <dbReference type="ChEBI" id="CHEBI:597326"/>
    </ligand>
</feature>
<feature type="binding site" evidence="1">
    <location>
        <position position="207"/>
    </location>
    <ligand>
        <name>pyridoxal 5'-phosphate</name>
        <dbReference type="ChEBI" id="CHEBI:597326"/>
    </ligand>
</feature>
<feature type="binding site" evidence="1">
    <location>
        <position position="233"/>
    </location>
    <ligand>
        <name>pyridoxal 5'-phosphate</name>
        <dbReference type="ChEBI" id="CHEBI:597326"/>
    </ligand>
</feature>
<feature type="binding site" evidence="1">
    <location>
        <position position="350"/>
    </location>
    <ligand>
        <name>substrate</name>
    </ligand>
</feature>
<feature type="modified residue" description="N6-(pyridoxal phosphate)lysine" evidence="1">
    <location>
        <position position="236"/>
    </location>
</feature>
<dbReference type="EC" id="2.3.1.47" evidence="1"/>
<dbReference type="EMBL" id="BX936398">
    <property type="protein sequence ID" value="CAH20423.1"/>
    <property type="molecule type" value="Genomic_DNA"/>
</dbReference>
<dbReference type="RefSeq" id="WP_011191957.1">
    <property type="nucleotide sequence ID" value="NC_006155.1"/>
</dbReference>
<dbReference type="SMR" id="Q66D66"/>
<dbReference type="KEGG" id="ypo:BZ17_1345"/>
<dbReference type="KEGG" id="yps:YPTB1183"/>
<dbReference type="PATRIC" id="fig|273123.14.peg.1436"/>
<dbReference type="UniPathway" id="UPA00078"/>
<dbReference type="Proteomes" id="UP000001011">
    <property type="component" value="Chromosome"/>
</dbReference>
<dbReference type="GO" id="GO:0008710">
    <property type="term" value="F:8-amino-7-oxononanoate synthase activity"/>
    <property type="evidence" value="ECO:0007669"/>
    <property type="project" value="UniProtKB-UniRule"/>
</dbReference>
<dbReference type="GO" id="GO:0030170">
    <property type="term" value="F:pyridoxal phosphate binding"/>
    <property type="evidence" value="ECO:0007669"/>
    <property type="project" value="UniProtKB-UniRule"/>
</dbReference>
<dbReference type="GO" id="GO:0009102">
    <property type="term" value="P:biotin biosynthetic process"/>
    <property type="evidence" value="ECO:0007669"/>
    <property type="project" value="UniProtKB-UniRule"/>
</dbReference>
<dbReference type="Gene3D" id="3.90.1150.10">
    <property type="entry name" value="Aspartate Aminotransferase, domain 1"/>
    <property type="match status" value="1"/>
</dbReference>
<dbReference type="Gene3D" id="3.40.640.10">
    <property type="entry name" value="Type I PLP-dependent aspartate aminotransferase-like (Major domain)"/>
    <property type="match status" value="1"/>
</dbReference>
<dbReference type="HAMAP" id="MF_01693">
    <property type="entry name" value="BioF_aminotrans_2"/>
    <property type="match status" value="1"/>
</dbReference>
<dbReference type="InterPro" id="IPR001917">
    <property type="entry name" value="Aminotrans_II_pyridoxalP_BS"/>
</dbReference>
<dbReference type="InterPro" id="IPR004839">
    <property type="entry name" value="Aminotransferase_I/II_large"/>
</dbReference>
<dbReference type="InterPro" id="IPR050087">
    <property type="entry name" value="AON_synthase_class-II"/>
</dbReference>
<dbReference type="InterPro" id="IPR004723">
    <property type="entry name" value="AONS_Archaea/Proteobacteria"/>
</dbReference>
<dbReference type="InterPro" id="IPR022834">
    <property type="entry name" value="AONS_Proteobacteria"/>
</dbReference>
<dbReference type="InterPro" id="IPR015424">
    <property type="entry name" value="PyrdxlP-dep_Trfase"/>
</dbReference>
<dbReference type="InterPro" id="IPR015421">
    <property type="entry name" value="PyrdxlP-dep_Trfase_major"/>
</dbReference>
<dbReference type="InterPro" id="IPR015422">
    <property type="entry name" value="PyrdxlP-dep_Trfase_small"/>
</dbReference>
<dbReference type="NCBIfam" id="TIGR00858">
    <property type="entry name" value="bioF"/>
    <property type="match status" value="1"/>
</dbReference>
<dbReference type="PANTHER" id="PTHR13693:SF100">
    <property type="entry name" value="8-AMINO-7-OXONONANOATE SYNTHASE"/>
    <property type="match status" value="1"/>
</dbReference>
<dbReference type="PANTHER" id="PTHR13693">
    <property type="entry name" value="CLASS II AMINOTRANSFERASE/8-AMINO-7-OXONONANOATE SYNTHASE"/>
    <property type="match status" value="1"/>
</dbReference>
<dbReference type="Pfam" id="PF00155">
    <property type="entry name" value="Aminotran_1_2"/>
    <property type="match status" value="1"/>
</dbReference>
<dbReference type="SUPFAM" id="SSF53383">
    <property type="entry name" value="PLP-dependent transferases"/>
    <property type="match status" value="1"/>
</dbReference>
<dbReference type="PROSITE" id="PS00599">
    <property type="entry name" value="AA_TRANSFER_CLASS_2"/>
    <property type="match status" value="1"/>
</dbReference>
<accession>Q66D66</accession>
<comment type="function">
    <text evidence="1">Catalyzes the decarboxylative condensation of pimeloyl-[acyl-carrier protein] and L-alanine to produce 8-amino-7-oxononanoate (AON), [acyl-carrier protein], and carbon dioxide.</text>
</comment>
<comment type="catalytic activity">
    <reaction evidence="1">
        <text>6-carboxyhexanoyl-[ACP] + L-alanine + H(+) = (8S)-8-amino-7-oxononanoate + holo-[ACP] + CO2</text>
        <dbReference type="Rhea" id="RHEA:42288"/>
        <dbReference type="Rhea" id="RHEA-COMP:9685"/>
        <dbReference type="Rhea" id="RHEA-COMP:9955"/>
        <dbReference type="ChEBI" id="CHEBI:15378"/>
        <dbReference type="ChEBI" id="CHEBI:16526"/>
        <dbReference type="ChEBI" id="CHEBI:57972"/>
        <dbReference type="ChEBI" id="CHEBI:64479"/>
        <dbReference type="ChEBI" id="CHEBI:78846"/>
        <dbReference type="ChEBI" id="CHEBI:149468"/>
        <dbReference type="EC" id="2.3.1.47"/>
    </reaction>
</comment>
<comment type="cofactor">
    <cofactor evidence="1">
        <name>pyridoxal 5'-phosphate</name>
        <dbReference type="ChEBI" id="CHEBI:597326"/>
    </cofactor>
</comment>
<comment type="pathway">
    <text evidence="1">Cofactor biosynthesis; biotin biosynthesis.</text>
</comment>
<comment type="subunit">
    <text evidence="1">Homodimer.</text>
</comment>
<comment type="similarity">
    <text evidence="1">Belongs to the class-II pyridoxal-phosphate-dependent aminotransferase family. BioF subfamily.</text>
</comment>
<keyword id="KW-0093">Biotin biosynthesis</keyword>
<keyword id="KW-0663">Pyridoxal phosphate</keyword>
<keyword id="KW-0808">Transferase</keyword>
<sequence length="383" mass="41668">MSWQDKIAQGLQRRRDAAAYRTRQVNEGANGRWLQSGERQYLNFSSNDYLGLSQNDEVIAAWQQGARRYGVGSGGSGHVTGYSQPHARLEQQLADWLGYPRALLFISGYAANQAVLTALTDADDRILADKLSHASLLEAAAHSPAQLRRFQHNQPEALQNLLIKPCQGQTLVVTEGVFSMDGDSAPLAALQQQTSAAGGWLLVDDAHGIGVHGEEGRGSCWLQGVQPELLVVTFGKAFGLSGAAVLCQEPVAEYLLQYARHLIYSTAMPPAQACALQAALRQVQQGDALRQQLQQRIRQFRTAAAHLPLQLGASKTAIQPLLVGDNQQSLIWAEQLRAAGLWVTAIRPPTVPPGSARLRITLSAAHQPEDIDRLLEVLYGLCH</sequence>
<name>BIOF_YERPS</name>
<organism>
    <name type="scientific">Yersinia pseudotuberculosis serotype I (strain IP32953)</name>
    <dbReference type="NCBI Taxonomy" id="273123"/>
    <lineage>
        <taxon>Bacteria</taxon>
        <taxon>Pseudomonadati</taxon>
        <taxon>Pseudomonadota</taxon>
        <taxon>Gammaproteobacteria</taxon>
        <taxon>Enterobacterales</taxon>
        <taxon>Yersiniaceae</taxon>
        <taxon>Yersinia</taxon>
    </lineage>
</organism>
<protein>
    <recommendedName>
        <fullName evidence="1">8-amino-7-oxononanoate synthase</fullName>
        <shortName evidence="1">AONS</shortName>
        <ecNumber evidence="1">2.3.1.47</ecNumber>
    </recommendedName>
    <alternativeName>
        <fullName evidence="1">7-keto-8-amino-pelargonic acid synthase</fullName>
        <shortName evidence="1">7-KAP synthase</shortName>
        <shortName evidence="1">KAPA synthase</shortName>
    </alternativeName>
    <alternativeName>
        <fullName evidence="1">8-amino-7-ketopelargonate synthase</fullName>
    </alternativeName>
</protein>